<name>RNH_THEPX</name>
<evidence type="ECO:0000255" key="1">
    <source>
        <dbReference type="HAMAP-Rule" id="MF_00042"/>
    </source>
</evidence>
<evidence type="ECO:0000255" key="2">
    <source>
        <dbReference type="PROSITE-ProRule" id="PRU00408"/>
    </source>
</evidence>
<keyword id="KW-0963">Cytoplasm</keyword>
<keyword id="KW-0255">Endonuclease</keyword>
<keyword id="KW-0378">Hydrolase</keyword>
<keyword id="KW-0460">Magnesium</keyword>
<keyword id="KW-0479">Metal-binding</keyword>
<keyword id="KW-0540">Nuclease</keyword>
<feature type="chain" id="PRO_1000090922" description="Ribonuclease H">
    <location>
        <begin position="1"/>
        <end position="155"/>
    </location>
</feature>
<feature type="domain" description="RNase H type-1" evidence="2">
    <location>
        <begin position="4"/>
        <end position="146"/>
    </location>
</feature>
<feature type="binding site" evidence="1">
    <location>
        <position position="13"/>
    </location>
    <ligand>
        <name>Mg(2+)</name>
        <dbReference type="ChEBI" id="CHEBI:18420"/>
        <label>1</label>
    </ligand>
</feature>
<feature type="binding site" evidence="1">
    <location>
        <position position="13"/>
    </location>
    <ligand>
        <name>Mg(2+)</name>
        <dbReference type="ChEBI" id="CHEBI:18420"/>
        <label>2</label>
    </ligand>
</feature>
<feature type="binding site" evidence="1">
    <location>
        <position position="51"/>
    </location>
    <ligand>
        <name>Mg(2+)</name>
        <dbReference type="ChEBI" id="CHEBI:18420"/>
        <label>1</label>
    </ligand>
</feature>
<feature type="binding site" evidence="1">
    <location>
        <position position="73"/>
    </location>
    <ligand>
        <name>Mg(2+)</name>
        <dbReference type="ChEBI" id="CHEBI:18420"/>
        <label>1</label>
    </ligand>
</feature>
<feature type="binding site" evidence="1">
    <location>
        <position position="138"/>
    </location>
    <ligand>
        <name>Mg(2+)</name>
        <dbReference type="ChEBI" id="CHEBI:18420"/>
        <label>2</label>
    </ligand>
</feature>
<proteinExistence type="inferred from homology"/>
<sequence length="155" mass="17785">MSNNIDVVEIYTDGACSGNPGPGGWAAVLLYKGTKKEISGFEENTTNNRMELKAVIEGLKALKRPCKVNLYSDSSYVINAFKEGWLEKWQKNNWLKSDKTPVENQDLWKELLEISKNHQVNWIKVKGHADNEYNNLCDRLATEQIKRNTRQNPKE</sequence>
<dbReference type="EC" id="3.1.26.4" evidence="1"/>
<dbReference type="EMBL" id="CP000923">
    <property type="protein sequence ID" value="ABY92902.1"/>
    <property type="molecule type" value="Genomic_DNA"/>
</dbReference>
<dbReference type="RefSeq" id="WP_009052378.1">
    <property type="nucleotide sequence ID" value="NC_010320.1"/>
</dbReference>
<dbReference type="SMR" id="B0K1A7"/>
<dbReference type="KEGG" id="tex:Teth514_1616"/>
<dbReference type="HOGENOM" id="CLU_030894_6_2_9"/>
<dbReference type="Proteomes" id="UP000002155">
    <property type="component" value="Chromosome"/>
</dbReference>
<dbReference type="GO" id="GO:0005737">
    <property type="term" value="C:cytoplasm"/>
    <property type="evidence" value="ECO:0007669"/>
    <property type="project" value="UniProtKB-SubCell"/>
</dbReference>
<dbReference type="GO" id="GO:0000287">
    <property type="term" value="F:magnesium ion binding"/>
    <property type="evidence" value="ECO:0007669"/>
    <property type="project" value="UniProtKB-UniRule"/>
</dbReference>
<dbReference type="GO" id="GO:0003676">
    <property type="term" value="F:nucleic acid binding"/>
    <property type="evidence" value="ECO:0007669"/>
    <property type="project" value="InterPro"/>
</dbReference>
<dbReference type="GO" id="GO:0004523">
    <property type="term" value="F:RNA-DNA hybrid ribonuclease activity"/>
    <property type="evidence" value="ECO:0007669"/>
    <property type="project" value="UniProtKB-UniRule"/>
</dbReference>
<dbReference type="GO" id="GO:0043137">
    <property type="term" value="P:DNA replication, removal of RNA primer"/>
    <property type="evidence" value="ECO:0007669"/>
    <property type="project" value="TreeGrafter"/>
</dbReference>
<dbReference type="CDD" id="cd09278">
    <property type="entry name" value="RNase_HI_prokaryote_like"/>
    <property type="match status" value="1"/>
</dbReference>
<dbReference type="FunFam" id="3.30.420.10:FF:000089">
    <property type="entry name" value="Ribonuclease H"/>
    <property type="match status" value="1"/>
</dbReference>
<dbReference type="Gene3D" id="3.30.420.10">
    <property type="entry name" value="Ribonuclease H-like superfamily/Ribonuclease H"/>
    <property type="match status" value="1"/>
</dbReference>
<dbReference type="HAMAP" id="MF_00042">
    <property type="entry name" value="RNase_H"/>
    <property type="match status" value="1"/>
</dbReference>
<dbReference type="InterPro" id="IPR050092">
    <property type="entry name" value="RNase_H"/>
</dbReference>
<dbReference type="InterPro" id="IPR012337">
    <property type="entry name" value="RNaseH-like_sf"/>
</dbReference>
<dbReference type="InterPro" id="IPR002156">
    <property type="entry name" value="RNaseH_domain"/>
</dbReference>
<dbReference type="InterPro" id="IPR036397">
    <property type="entry name" value="RNaseH_sf"/>
</dbReference>
<dbReference type="InterPro" id="IPR022892">
    <property type="entry name" value="RNaseHI"/>
</dbReference>
<dbReference type="NCBIfam" id="NF001236">
    <property type="entry name" value="PRK00203.1"/>
    <property type="match status" value="1"/>
</dbReference>
<dbReference type="PANTHER" id="PTHR10642">
    <property type="entry name" value="RIBONUCLEASE H1"/>
    <property type="match status" value="1"/>
</dbReference>
<dbReference type="PANTHER" id="PTHR10642:SF26">
    <property type="entry name" value="RIBONUCLEASE H1"/>
    <property type="match status" value="1"/>
</dbReference>
<dbReference type="Pfam" id="PF00075">
    <property type="entry name" value="RNase_H"/>
    <property type="match status" value="1"/>
</dbReference>
<dbReference type="SUPFAM" id="SSF53098">
    <property type="entry name" value="Ribonuclease H-like"/>
    <property type="match status" value="1"/>
</dbReference>
<dbReference type="PROSITE" id="PS50879">
    <property type="entry name" value="RNASE_H_1"/>
    <property type="match status" value="1"/>
</dbReference>
<reference key="1">
    <citation type="submission" date="2008-01" db="EMBL/GenBank/DDBJ databases">
        <title>Complete sequence of Thermoanaerobacter sp. X514.</title>
        <authorList>
            <consortium name="US DOE Joint Genome Institute"/>
            <person name="Copeland A."/>
            <person name="Lucas S."/>
            <person name="Lapidus A."/>
            <person name="Barry K."/>
            <person name="Glavina del Rio T."/>
            <person name="Dalin E."/>
            <person name="Tice H."/>
            <person name="Pitluck S."/>
            <person name="Bruce D."/>
            <person name="Goodwin L."/>
            <person name="Saunders E."/>
            <person name="Brettin T."/>
            <person name="Detter J.C."/>
            <person name="Han C."/>
            <person name="Schmutz J."/>
            <person name="Larimer F."/>
            <person name="Land M."/>
            <person name="Hauser L."/>
            <person name="Kyrpides N."/>
            <person name="Kim E."/>
            <person name="Hemme C."/>
            <person name="Fields M.W."/>
            <person name="He Z."/>
            <person name="Zhou J."/>
            <person name="Richardson P."/>
        </authorList>
    </citation>
    <scope>NUCLEOTIDE SEQUENCE [LARGE SCALE GENOMIC DNA]</scope>
    <source>
        <strain>X514</strain>
    </source>
</reference>
<accession>B0K1A7</accession>
<protein>
    <recommendedName>
        <fullName evidence="1">Ribonuclease H</fullName>
        <shortName evidence="1">RNase H</shortName>
        <ecNumber evidence="1">3.1.26.4</ecNumber>
    </recommendedName>
</protein>
<gene>
    <name evidence="1" type="primary">rnhA</name>
    <name type="ordered locus">Teth514_1616</name>
</gene>
<organism>
    <name type="scientific">Thermoanaerobacter sp. (strain X514)</name>
    <dbReference type="NCBI Taxonomy" id="399726"/>
    <lineage>
        <taxon>Bacteria</taxon>
        <taxon>Bacillati</taxon>
        <taxon>Bacillota</taxon>
        <taxon>Clostridia</taxon>
        <taxon>Thermoanaerobacterales</taxon>
        <taxon>Thermoanaerobacteraceae</taxon>
        <taxon>Thermoanaerobacter</taxon>
    </lineage>
</organism>
<comment type="function">
    <text evidence="1">Endonuclease that specifically degrades the RNA of RNA-DNA hybrids.</text>
</comment>
<comment type="catalytic activity">
    <reaction evidence="1">
        <text>Endonucleolytic cleavage to 5'-phosphomonoester.</text>
        <dbReference type="EC" id="3.1.26.4"/>
    </reaction>
</comment>
<comment type="cofactor">
    <cofactor evidence="1">
        <name>Mg(2+)</name>
        <dbReference type="ChEBI" id="CHEBI:18420"/>
    </cofactor>
    <text evidence="1">Binds 1 Mg(2+) ion per subunit. May bind a second metal ion at a regulatory site, or after substrate binding.</text>
</comment>
<comment type="subunit">
    <text evidence="1">Monomer.</text>
</comment>
<comment type="subcellular location">
    <subcellularLocation>
        <location evidence="1">Cytoplasm</location>
    </subcellularLocation>
</comment>
<comment type="similarity">
    <text evidence="1">Belongs to the RNase H family.</text>
</comment>